<reference key="1">
    <citation type="journal article" date="2003" name="Proc. Natl. Acad. Sci. U.S.A.">
        <title>Complete genome sequence of the Q-fever pathogen, Coxiella burnetii.</title>
        <authorList>
            <person name="Seshadri R."/>
            <person name="Paulsen I.T."/>
            <person name="Eisen J.A."/>
            <person name="Read T.D."/>
            <person name="Nelson K.E."/>
            <person name="Nelson W.C."/>
            <person name="Ward N.L."/>
            <person name="Tettelin H."/>
            <person name="Davidsen T.M."/>
            <person name="Beanan M.J."/>
            <person name="DeBoy R.T."/>
            <person name="Daugherty S.C."/>
            <person name="Brinkac L.M."/>
            <person name="Madupu R."/>
            <person name="Dodson R.J."/>
            <person name="Khouri H.M."/>
            <person name="Lee K.H."/>
            <person name="Carty H.A."/>
            <person name="Scanlan D."/>
            <person name="Heinzen R.A."/>
            <person name="Thompson H.A."/>
            <person name="Samuel J.E."/>
            <person name="Fraser C.M."/>
            <person name="Heidelberg J.F."/>
        </authorList>
    </citation>
    <scope>NUCLEOTIDE SEQUENCE [LARGE SCALE GENOMIC DNA]</scope>
    <source>
        <strain>RSA 493 / Nine Mile phase I</strain>
    </source>
</reference>
<sequence>MKFLFDYFPIICFFVAYKFWGIYIATAAAMVVSALQVAIYWIRFRRFEKFHVITLIFILLLGSFTLVFHNAIFIKWKPTIVYWIFAIVLFGSHFFGKHTLVHRMLKEKIELPAKTWSRLNLSWALFFLILGVLNLFVVYNFDTNTWVNFKLFGTLVLTLVFILGQAFYIARHAQNLKMNSR</sequence>
<comment type="function">
    <text evidence="1">Plays a role in cell envelope biogenesis, maintenance of cell envelope integrity and membrane homeostasis.</text>
</comment>
<comment type="subcellular location">
    <subcellularLocation>
        <location evidence="1">Cell inner membrane</location>
        <topology evidence="1">Multi-pass membrane protein</topology>
    </subcellularLocation>
</comment>
<comment type="similarity">
    <text evidence="1">Belongs to the YciB family.</text>
</comment>
<accession>Q83D36</accession>
<feature type="chain" id="PRO_1000021007" description="Inner membrane-spanning protein YciB">
    <location>
        <begin position="1"/>
        <end position="181"/>
    </location>
</feature>
<feature type="transmembrane region" description="Helical" evidence="1">
    <location>
        <begin position="8"/>
        <end position="28"/>
    </location>
</feature>
<feature type="transmembrane region" description="Helical" evidence="1">
    <location>
        <begin position="53"/>
        <end position="73"/>
    </location>
</feature>
<feature type="transmembrane region" description="Helical" evidence="1">
    <location>
        <begin position="76"/>
        <end position="96"/>
    </location>
</feature>
<feature type="transmembrane region" description="Helical" evidence="1">
    <location>
        <begin position="121"/>
        <end position="141"/>
    </location>
</feature>
<feature type="transmembrane region" description="Helical" evidence="1">
    <location>
        <begin position="149"/>
        <end position="169"/>
    </location>
</feature>
<organism>
    <name type="scientific">Coxiella burnetii (strain RSA 493 / Nine Mile phase I)</name>
    <dbReference type="NCBI Taxonomy" id="227377"/>
    <lineage>
        <taxon>Bacteria</taxon>
        <taxon>Pseudomonadati</taxon>
        <taxon>Pseudomonadota</taxon>
        <taxon>Gammaproteobacteria</taxon>
        <taxon>Legionellales</taxon>
        <taxon>Coxiellaceae</taxon>
        <taxon>Coxiella</taxon>
    </lineage>
</organism>
<name>YCIB_COXBU</name>
<proteinExistence type="inferred from homology"/>
<protein>
    <recommendedName>
        <fullName evidence="1">Inner membrane-spanning protein YciB</fullName>
    </recommendedName>
</protein>
<gene>
    <name evidence="1" type="primary">yciB</name>
    <name type="ordered locus">CBU_0908</name>
</gene>
<dbReference type="EMBL" id="AE016828">
    <property type="protein sequence ID" value="AAO90437.1"/>
    <property type="molecule type" value="Genomic_DNA"/>
</dbReference>
<dbReference type="RefSeq" id="WP_010957880.1">
    <property type="nucleotide sequence ID" value="NC_002971.4"/>
</dbReference>
<dbReference type="STRING" id="227377.CBU_0908"/>
<dbReference type="EnsemblBacteria" id="AAO90437">
    <property type="protein sequence ID" value="AAO90437"/>
    <property type="gene ID" value="CBU_0908"/>
</dbReference>
<dbReference type="KEGG" id="cbu:CBU_0908"/>
<dbReference type="PATRIC" id="fig|227377.7.peg.895"/>
<dbReference type="eggNOG" id="COG2917">
    <property type="taxonomic scope" value="Bacteria"/>
</dbReference>
<dbReference type="HOGENOM" id="CLU_089554_2_0_6"/>
<dbReference type="OrthoDB" id="9788219at2"/>
<dbReference type="Proteomes" id="UP000002671">
    <property type="component" value="Chromosome"/>
</dbReference>
<dbReference type="GO" id="GO:0005886">
    <property type="term" value="C:plasma membrane"/>
    <property type="evidence" value="ECO:0000318"/>
    <property type="project" value="GO_Central"/>
</dbReference>
<dbReference type="HAMAP" id="MF_00189">
    <property type="entry name" value="YciB"/>
    <property type="match status" value="1"/>
</dbReference>
<dbReference type="InterPro" id="IPR006008">
    <property type="entry name" value="YciB"/>
</dbReference>
<dbReference type="NCBIfam" id="TIGR00997">
    <property type="entry name" value="ispZ"/>
    <property type="match status" value="1"/>
</dbReference>
<dbReference type="NCBIfam" id="NF001325">
    <property type="entry name" value="PRK00259.1-3"/>
    <property type="match status" value="1"/>
</dbReference>
<dbReference type="PANTHER" id="PTHR36917:SF1">
    <property type="entry name" value="INNER MEMBRANE-SPANNING PROTEIN YCIB"/>
    <property type="match status" value="1"/>
</dbReference>
<dbReference type="PANTHER" id="PTHR36917">
    <property type="entry name" value="INTRACELLULAR SEPTATION PROTEIN A-RELATED"/>
    <property type="match status" value="1"/>
</dbReference>
<dbReference type="Pfam" id="PF04279">
    <property type="entry name" value="IspA"/>
    <property type="match status" value="1"/>
</dbReference>
<evidence type="ECO:0000255" key="1">
    <source>
        <dbReference type="HAMAP-Rule" id="MF_00189"/>
    </source>
</evidence>
<keyword id="KW-0997">Cell inner membrane</keyword>
<keyword id="KW-1003">Cell membrane</keyword>
<keyword id="KW-0472">Membrane</keyword>
<keyword id="KW-1185">Reference proteome</keyword>
<keyword id="KW-0812">Transmembrane</keyword>
<keyword id="KW-1133">Transmembrane helix</keyword>